<reference key="1">
    <citation type="journal article" date="1994" name="Nature">
        <title>A brain serine/threonine protein kinase activated by Cdc42 and Rac1.</title>
        <authorList>
            <person name="Manser E."/>
            <person name="Leung T."/>
            <person name="Salihuddin H."/>
            <person name="Zhao Z.-S."/>
            <person name="Lim L."/>
        </authorList>
    </citation>
    <scope>NUCLEOTIDE SEQUENCE [MRNA]</scope>
    <source>
        <tissue>Brain</tissue>
    </source>
</reference>
<reference key="2">
    <citation type="submission" date="1998-01" db="EMBL/GenBank/DDBJ databases">
        <authorList>
            <person name="Zhao Z.-S."/>
        </authorList>
    </citation>
    <scope>SEQUENCE REVISION</scope>
</reference>
<reference key="3">
    <citation type="submission" date="1996-07" db="EMBL/GenBank/DDBJ databases">
        <authorList>
            <person name="Osada S."/>
            <person name="Izawa M."/>
            <person name="Saito R."/>
            <person name="Mizuno K."/>
            <person name="Suzuki A."/>
            <person name="Hirai S."/>
            <person name="Ohno S."/>
        </authorList>
    </citation>
    <scope>NUCLEOTIDE SEQUENCE [MRNA]</scope>
</reference>
<reference key="4">
    <citation type="journal article" date="1995" name="J. Biol. Chem.">
        <title>Molecular cloning of a new member of the p21-Cdc42/Rac-activated kinase (PAK) family.</title>
        <authorList>
            <person name="Manser E."/>
            <person name="Chong C."/>
            <person name="Zhao Z.-S."/>
            <person name="Leung T."/>
            <person name="Michael G."/>
            <person name="Hall C."/>
            <person name="Lim L."/>
        </authorList>
    </citation>
    <scope>TISSUE SPECIFICITY</scope>
</reference>
<reference key="5">
    <citation type="journal article" date="1997" name="Mol. Cell. Biol.">
        <title>Expression of constitutively active alpha-PAK reveals effects of the kinase on actin and focal complexes.</title>
        <authorList>
            <person name="Manser E."/>
            <person name="Huang H.Y."/>
            <person name="Loo T.H."/>
            <person name="Chen X.Q."/>
            <person name="Dong J.M."/>
            <person name="Leung T."/>
            <person name="Lim L."/>
        </authorList>
    </citation>
    <scope>FUNCTION</scope>
    <scope>CATALYTIC ACTIVITY</scope>
    <scope>AUTOPHOSPHORYLATION</scope>
    <scope>INTERACTION WITH CDC42 AND RAC1</scope>
    <scope>ACTIVITY REGULATION</scope>
    <scope>SUBCELLULAR LOCATION</scope>
    <scope>MUTAGENESIS OF LEU-404 AND THR-422</scope>
    <scope>PARTIAL PROTEIN SEQUENCE</scope>
    <scope>PHOSPHORYLATION AT SER-21; SER-57; SER-144; SER-149; SER-198; SER-203 AND THR-422</scope>
</reference>
<reference key="6">
    <citation type="journal article" date="1998" name="Biochemistry">
        <title>Delineation of the Cdc42/Rac-binding domain of p21-activated kinase.</title>
        <authorList>
            <person name="Thompson G."/>
            <person name="Owen D."/>
            <person name="Chalk P.A."/>
            <person name="Lowe P.N."/>
        </authorList>
    </citation>
    <scope>DOMAIN GTPASE BINDING</scope>
</reference>
<reference key="7">
    <citation type="journal article" date="1998" name="J. Biol. Chem.">
        <title>Differential effects of PAK1-activating mutations reveal activity-dependent and -independent effects on cytoskeletal regulation.</title>
        <authorList>
            <person name="Frost J.A."/>
            <person name="Khokhlatchev A."/>
            <person name="Stippec S."/>
            <person name="White M.A."/>
            <person name="Cobb M.H."/>
        </authorList>
    </citation>
    <scope>FUNCTION</scope>
    <scope>SUBCELLULAR LOCATION</scope>
    <scope>ACTIVITY REGULATION</scope>
    <scope>AUTOREGULATORY REGION</scope>
    <scope>MUTAGENESIS OF HIS-83; HIS-86 AND LEU-107</scope>
</reference>
<reference key="8">
    <citation type="journal article" date="1998" name="Mol. Cell. Biol.">
        <title>A conserved negative regulatory region in alphaPAK: inhibition of PAK kinases reveals their morphological roles downstream of Cdc42 and Rac1.</title>
        <authorList>
            <person name="Zhao Z.S."/>
            <person name="Manser E."/>
            <person name="Chen X.Q."/>
            <person name="Chong C."/>
            <person name="Leung T."/>
            <person name="Lim L."/>
        </authorList>
    </citation>
    <scope>FUNCTION</scope>
    <scope>SUBCELLULAR LOCATION</scope>
    <scope>AUTOREGULATORY DOMAIN</scope>
</reference>
<reference key="9">
    <citation type="journal article" date="2001" name="J. Biol. Chem.">
        <title>The mechanism of PAK activation. Autophosphorylation events in both regulatory and kinase domains control activity.</title>
        <authorList>
            <person name="Chong C."/>
            <person name="Tan L."/>
            <person name="Lim L."/>
            <person name="Manser E."/>
        </authorList>
    </citation>
    <scope>MUTAGENESIS OF SER-144; SER-149 AND THR-422</scope>
</reference>
<reference key="10">
    <citation type="journal article" date="2003" name="J. Cell Biol.">
        <title>PAK1 phosphorylation of MEK1 regulates fibronectin-stimulated MAPK activation.</title>
        <authorList>
            <person name="Slack-Davis J.K."/>
            <person name="Eblen S.T."/>
            <person name="Zecevic M."/>
            <person name="Boerner S.A."/>
            <person name="Tarcsafalvi A."/>
            <person name="Diaz H.B."/>
            <person name="Marshall M.S."/>
            <person name="Weber M.J."/>
            <person name="Parsons J.T."/>
            <person name="Catling A.D."/>
        </authorList>
    </citation>
    <scope>FUNCTION</scope>
</reference>
<reference key="11">
    <citation type="journal article" date="2004" name="J. Biol. Chem.">
        <title>Characterization of OSR1, a member of the mammalian Ste20p/germinal center kinase subfamily.</title>
        <authorList>
            <person name="Chen W."/>
            <person name="Yazicioglu M."/>
            <person name="Cobb M.H."/>
        </authorList>
    </citation>
    <scope>FUNCTION</scope>
    <scope>ACTIVITY REGULATION</scope>
    <scope>INTERACTION WITH OXSR1</scope>
    <scope>PHOSPHORYLATION AT THR-84</scope>
    <scope>MUTAGENESIS OF THR-84</scope>
</reference>
<reference key="12">
    <citation type="journal article" date="2008" name="Nat. Med.">
        <title>Modification of mineralocorticoid receptor function by Rac1 GTPase: implication in proteinuric kidney disease.</title>
        <authorList>
            <person name="Shibata S."/>
            <person name="Nagase M."/>
            <person name="Yoshida S."/>
            <person name="Kawarazaki W."/>
            <person name="Kurihara H."/>
            <person name="Tanaka H."/>
            <person name="Miyoshi J."/>
            <person name="Takai Y."/>
            <person name="Fujita T."/>
        </authorList>
    </citation>
    <scope>FUNCTION</scope>
</reference>
<reference key="13">
    <citation type="journal article" date="2012" name="J. Biol. Chem.">
        <title>Synapses of amphids defective (SAD-A) kinase promotes glucose-stimulated insulin secretion through activation of p21-activated kinase (PAK1) in pancreatic beta-Cells.</title>
        <authorList>
            <person name="Nie J."/>
            <person name="Sun C."/>
            <person name="Faruque O."/>
            <person name="Ye G."/>
            <person name="Li J."/>
            <person name="Liang Q."/>
            <person name="Chang Z."/>
            <person name="Yang W."/>
            <person name="Han X."/>
            <person name="Shi Y."/>
        </authorList>
    </citation>
    <scope>PHOSPHORYLATION AT THR-422</scope>
</reference>
<reference key="14">
    <citation type="journal article" date="2012" name="Nat. Commun.">
        <title>Quantitative maps of protein phosphorylation sites across 14 different rat organs and tissues.</title>
        <authorList>
            <person name="Lundby A."/>
            <person name="Secher A."/>
            <person name="Lage K."/>
            <person name="Nordsborg N.B."/>
            <person name="Dmytriyev A."/>
            <person name="Lundby C."/>
            <person name="Olsen J.V."/>
        </authorList>
    </citation>
    <scope>PHOSPHORYLATION [LARGE SCALE ANALYSIS] AT SER-174 AND SER-222</scope>
    <scope>IDENTIFICATION BY MASS SPECTROMETRY [LARGE SCALE ANALYSIS]</scope>
</reference>
<reference key="15">
    <citation type="journal article" date="2013" name="J. Neurosci.">
        <title>Shank3 deficiency induces NMDA receptor hypofunction via an actin-dependent mechanism.</title>
        <authorList>
            <person name="Duffney L.J."/>
            <person name="Wei J."/>
            <person name="Cheng J."/>
            <person name="Liu W."/>
            <person name="Smith K.R."/>
            <person name="Kittler J.T."/>
            <person name="Yan Z."/>
        </authorList>
    </citation>
    <scope>FUNCTION IN ACTIN POLYMERIZATION</scope>
    <scope>PHOSPHORYLATION AT THR-422</scope>
    <scope>MUTAGENESIS OF HIS-83; HIS-86; LYS-298 AND THR-422</scope>
</reference>
<reference key="16">
    <citation type="journal article" date="2014" name="Cell Rep.">
        <title>GIT1 and betaPIX are essential for GABA(A) receptor synaptic stability and inhibitory neurotransmission.</title>
        <authorList>
            <person name="Smith K.R."/>
            <person name="Davenport E.C."/>
            <person name="Wei J."/>
            <person name="Li X."/>
            <person name="Pathania M."/>
            <person name="Vaccaro V."/>
            <person name="Yan Z."/>
            <person name="Kittler J.T."/>
        </authorList>
    </citation>
    <scope>FUNCTION</scope>
</reference>
<reference key="17">
    <citation type="journal article" date="2000" name="Nat. Struct. Biol.">
        <title>Structure of Cdc42 bound to the GTPase binding domain of PAK.</title>
        <authorList>
            <person name="Morreale A."/>
            <person name="Venkatesan M."/>
            <person name="Mott H.R."/>
            <person name="Owen D."/>
            <person name="Nietlispach D."/>
            <person name="Lowe P.N."/>
            <person name="Laue E.D."/>
        </authorList>
    </citation>
    <scope>STRUCTURE BY NMR OF 75-118 IN COMPLEX WITH CDC42</scope>
    <scope>INTERACTION WITH CDC42</scope>
</reference>
<sequence>MSNNGLDVQDKPPAPPMRNTSTMIGAGSKDPGTLNHGSKPLPPNPEEKKKKDRFYRSILAGDKTNKKKEKERPEISLPSDFEHTIHVGFDAVTGEFTGMPEQWARLLQTSNITKSEQKKNPQAVLDVLEFYNSKKTSNSQKYMSFTDKSAEDYNSSNTLNVKTVSETPAVPPVSEDEDDDDDATPPPVIAPRPEHTKSVYTRSVIEPLPVTPTRDVATSPISPTENNTTPPDALTRNTEKQKKKPKMSDEEILEKLRSIVSVGDPKKKYTRFEKIGQGASGTVYTAMDVATGQEVAIKQMNLQQQPKKELIINEILVMRENKNPNIVNYLDSYLVGDELWVVMEYLAGGSLTDVVTETCMDEGQIAAVCRECLQALEFLHSNQVIHRDIKSDNILLGMDGSVKLTDFGFCAQITPEQSKRSTMVGTPYWMAPEVVTRKAYGPKVDIWSLGIMAIEMIEGEPPYLNENPLRALYLIATNGTPELQNPEKLSAIFRDFLNRCLEMDVEKRGSAKELLQHQFLKIAKPLSSLTPLIAAAKEATKNNH</sequence>
<proteinExistence type="evidence at protein level"/>
<organism>
    <name type="scientific">Rattus norvegicus</name>
    <name type="common">Rat</name>
    <dbReference type="NCBI Taxonomy" id="10116"/>
    <lineage>
        <taxon>Eukaryota</taxon>
        <taxon>Metazoa</taxon>
        <taxon>Chordata</taxon>
        <taxon>Craniata</taxon>
        <taxon>Vertebrata</taxon>
        <taxon>Euteleostomi</taxon>
        <taxon>Mammalia</taxon>
        <taxon>Eutheria</taxon>
        <taxon>Euarchontoglires</taxon>
        <taxon>Glires</taxon>
        <taxon>Rodentia</taxon>
        <taxon>Myomorpha</taxon>
        <taxon>Muroidea</taxon>
        <taxon>Muridae</taxon>
        <taxon>Murinae</taxon>
        <taxon>Rattus</taxon>
    </lineage>
</organism>
<keyword id="KW-0002">3D-structure</keyword>
<keyword id="KW-0007">Acetylation</keyword>
<keyword id="KW-0021">Allosteric enzyme</keyword>
<keyword id="KW-0053">Apoptosis</keyword>
<keyword id="KW-0067">ATP-binding</keyword>
<keyword id="KW-0965">Cell junction</keyword>
<keyword id="KW-1003">Cell membrane</keyword>
<keyword id="KW-0966">Cell projection</keyword>
<keyword id="KW-0158">Chromosome</keyword>
<keyword id="KW-0963">Cytoplasm</keyword>
<keyword id="KW-0206">Cytoskeleton</keyword>
<keyword id="KW-0903">Direct protein sequencing</keyword>
<keyword id="KW-0268">Exocytosis</keyword>
<keyword id="KW-0418">Kinase</keyword>
<keyword id="KW-0472">Membrane</keyword>
<keyword id="KW-0547">Nucleotide-binding</keyword>
<keyword id="KW-0539">Nucleus</keyword>
<keyword id="KW-0597">Phosphoprotein</keyword>
<keyword id="KW-1185">Reference proteome</keyword>
<keyword id="KW-0723">Serine/threonine-protein kinase</keyword>
<keyword id="KW-0808">Transferase</keyword>
<evidence type="ECO:0000250" key="1">
    <source>
        <dbReference type="UniProtKB" id="O88643"/>
    </source>
</evidence>
<evidence type="ECO:0000250" key="2">
    <source>
        <dbReference type="UniProtKB" id="Q13153"/>
    </source>
</evidence>
<evidence type="ECO:0000255" key="3">
    <source>
        <dbReference type="PROSITE-ProRule" id="PRU00057"/>
    </source>
</evidence>
<evidence type="ECO:0000255" key="4">
    <source>
        <dbReference type="PROSITE-ProRule" id="PRU00159"/>
    </source>
</evidence>
<evidence type="ECO:0000255" key="5">
    <source>
        <dbReference type="PROSITE-ProRule" id="PRU10027"/>
    </source>
</evidence>
<evidence type="ECO:0000256" key="6">
    <source>
        <dbReference type="SAM" id="MobiDB-lite"/>
    </source>
</evidence>
<evidence type="ECO:0000269" key="7">
    <source>
    </source>
</evidence>
<evidence type="ECO:0000269" key="8">
    <source>
    </source>
</evidence>
<evidence type="ECO:0000269" key="9">
    <source>
    </source>
</evidence>
<evidence type="ECO:0000269" key="10">
    <source>
    </source>
</evidence>
<evidence type="ECO:0000269" key="11">
    <source>
    </source>
</evidence>
<evidence type="ECO:0000269" key="12">
    <source>
    </source>
</evidence>
<evidence type="ECO:0000269" key="13">
    <source>
    </source>
</evidence>
<evidence type="ECO:0000269" key="14">
    <source>
    </source>
</evidence>
<evidence type="ECO:0000269" key="15">
    <source>
    </source>
</evidence>
<evidence type="ECO:0000269" key="16">
    <source>
    </source>
</evidence>
<evidence type="ECO:0000269" key="17">
    <source>
    </source>
</evidence>
<evidence type="ECO:0000303" key="18">
    <source>
    </source>
</evidence>
<evidence type="ECO:0000303" key="19">
    <source ref="3"/>
</evidence>
<evidence type="ECO:0000305" key="20"/>
<evidence type="ECO:0000305" key="21">
    <source>
    </source>
</evidence>
<evidence type="ECO:0000312" key="22">
    <source>
        <dbReference type="RGD" id="3250"/>
    </source>
</evidence>
<evidence type="ECO:0007744" key="23">
    <source>
    </source>
</evidence>
<evidence type="ECO:0007829" key="24">
    <source>
        <dbReference type="PDB" id="1E0A"/>
    </source>
</evidence>
<dbReference type="EC" id="2.7.11.1" evidence="15"/>
<dbReference type="EMBL" id="U23443">
    <property type="protein sequence ID" value="AAB95646.1"/>
    <property type="molecule type" value="mRNA"/>
</dbReference>
<dbReference type="EMBL" id="U49953">
    <property type="protein sequence ID" value="AAB61533.1"/>
    <property type="molecule type" value="mRNA"/>
</dbReference>
<dbReference type="PIR" id="S40482">
    <property type="entry name" value="S40482"/>
</dbReference>
<dbReference type="RefSeq" id="NP_058894.1">
    <property type="nucleotide sequence ID" value="NM_017198.2"/>
</dbReference>
<dbReference type="RefSeq" id="XP_006229814.1">
    <property type="nucleotide sequence ID" value="XM_006229752.4"/>
</dbReference>
<dbReference type="RefSeq" id="XP_006229815.1">
    <property type="nucleotide sequence ID" value="XM_006229753.4"/>
</dbReference>
<dbReference type="RefSeq" id="XP_006229816.1">
    <property type="nucleotide sequence ID" value="XM_006229754.5"/>
</dbReference>
<dbReference type="RefSeq" id="XP_038965324.1">
    <property type="nucleotide sequence ID" value="XM_039109396.1"/>
</dbReference>
<dbReference type="RefSeq" id="XP_063143586.1">
    <property type="nucleotide sequence ID" value="XM_063287516.1"/>
</dbReference>
<dbReference type="RefSeq" id="XP_063143587.1">
    <property type="nucleotide sequence ID" value="XM_063287517.1"/>
</dbReference>
<dbReference type="RefSeq" id="XP_063143590.1">
    <property type="nucleotide sequence ID" value="XM_063287520.1"/>
</dbReference>
<dbReference type="RefSeq" id="XP_063143594.1">
    <property type="nucleotide sequence ID" value="XM_063287524.1"/>
</dbReference>
<dbReference type="PDB" id="1E0A">
    <property type="method" value="NMR"/>
    <property type="chains" value="B=75-118"/>
</dbReference>
<dbReference type="PDBsum" id="1E0A"/>
<dbReference type="BMRB" id="P35465"/>
<dbReference type="SMR" id="P35465"/>
<dbReference type="BioGRID" id="248078">
    <property type="interactions" value="1"/>
</dbReference>
<dbReference type="DIP" id="DIP-32990N"/>
<dbReference type="ELM" id="P35465"/>
<dbReference type="FunCoup" id="P35465">
    <property type="interactions" value="2198"/>
</dbReference>
<dbReference type="IntAct" id="P35465">
    <property type="interactions" value="6"/>
</dbReference>
<dbReference type="MINT" id="P35465"/>
<dbReference type="STRING" id="10116.ENSRNOP00000073036"/>
<dbReference type="ChEMBL" id="CHEMBL3580528"/>
<dbReference type="GlyGen" id="P35465">
    <property type="glycosylation" value="1 site"/>
</dbReference>
<dbReference type="iPTMnet" id="P35465"/>
<dbReference type="PhosphoSitePlus" id="P35465"/>
<dbReference type="SwissPalm" id="P35465"/>
<dbReference type="jPOST" id="P35465"/>
<dbReference type="PaxDb" id="10116-ENSRNOP00000045832"/>
<dbReference type="Ensembl" id="ENSRNOT00000091952.2">
    <property type="protein sequence ID" value="ENSRNOP00000073036.1"/>
    <property type="gene ID" value="ENSRNOG00000029784.5"/>
</dbReference>
<dbReference type="GeneID" id="29431"/>
<dbReference type="KEGG" id="rno:29431"/>
<dbReference type="AGR" id="RGD:3250"/>
<dbReference type="CTD" id="5058"/>
<dbReference type="RGD" id="3250">
    <property type="gene designation" value="Pak1"/>
</dbReference>
<dbReference type="eggNOG" id="KOG0578">
    <property type="taxonomic scope" value="Eukaryota"/>
</dbReference>
<dbReference type="GeneTree" id="ENSGT00950000182988"/>
<dbReference type="HOGENOM" id="CLU_000288_26_6_1"/>
<dbReference type="InParanoid" id="P35465"/>
<dbReference type="OrthoDB" id="2914378at2759"/>
<dbReference type="PhylomeDB" id="P35465"/>
<dbReference type="TreeFam" id="TF105351"/>
<dbReference type="BRENDA" id="2.7.11.1">
    <property type="organism ID" value="5301"/>
</dbReference>
<dbReference type="Reactome" id="R-RNO-202433">
    <property type="pathway name" value="Generation of second messenger molecules"/>
</dbReference>
<dbReference type="Reactome" id="R-RNO-2029482">
    <property type="pathway name" value="Regulation of actin dynamics for phagocytic cup formation"/>
</dbReference>
<dbReference type="Reactome" id="R-RNO-2871796">
    <property type="pathway name" value="FCERI mediated MAPK activation"/>
</dbReference>
<dbReference type="Reactome" id="R-RNO-389359">
    <property type="pathway name" value="CD28 dependent Vav1 pathway"/>
</dbReference>
<dbReference type="Reactome" id="R-RNO-3928662">
    <property type="pathway name" value="EPHB-mediated forward signaling"/>
</dbReference>
<dbReference type="Reactome" id="R-RNO-3928664">
    <property type="pathway name" value="Ephrin signaling"/>
</dbReference>
<dbReference type="Reactome" id="R-RNO-399954">
    <property type="pathway name" value="Sema3A PAK dependent Axon repulsion"/>
</dbReference>
<dbReference type="Reactome" id="R-RNO-445144">
    <property type="pathway name" value="Signal transduction by L1"/>
</dbReference>
<dbReference type="Reactome" id="R-RNO-445355">
    <property type="pathway name" value="Smooth Muscle Contraction"/>
</dbReference>
<dbReference type="Reactome" id="R-RNO-5218920">
    <property type="pathway name" value="VEGFR2 mediated vascular permeability"/>
</dbReference>
<dbReference type="Reactome" id="R-RNO-5621575">
    <property type="pathway name" value="CD209 (DC-SIGN) signaling"/>
</dbReference>
<dbReference type="Reactome" id="R-RNO-5627123">
    <property type="pathway name" value="RHO GTPases activate PAKs"/>
</dbReference>
<dbReference type="Reactome" id="R-RNO-5687128">
    <property type="pathway name" value="MAPK6/MAPK4 signaling"/>
</dbReference>
<dbReference type="Reactome" id="R-RNO-8964616">
    <property type="pathway name" value="G beta:gamma signalling through CDC42"/>
</dbReference>
<dbReference type="Reactome" id="R-RNO-9013149">
    <property type="pathway name" value="RAC1 GTPase cycle"/>
</dbReference>
<dbReference type="Reactome" id="R-RNO-9013404">
    <property type="pathway name" value="RAC2 GTPase cycle"/>
</dbReference>
<dbReference type="Reactome" id="R-RNO-9013406">
    <property type="pathway name" value="RHOQ GTPase cycle"/>
</dbReference>
<dbReference type="Reactome" id="R-RNO-9013407">
    <property type="pathway name" value="RHOH GTPase cycle"/>
</dbReference>
<dbReference type="Reactome" id="R-RNO-9013420">
    <property type="pathway name" value="RHOU GTPase cycle"/>
</dbReference>
<dbReference type="Reactome" id="R-RNO-9013424">
    <property type="pathway name" value="RHOV GTPase cycle"/>
</dbReference>
<dbReference type="EvolutionaryTrace" id="P35465"/>
<dbReference type="PRO" id="PR:P35465"/>
<dbReference type="Proteomes" id="UP000002494">
    <property type="component" value="Chromosome 1"/>
</dbReference>
<dbReference type="Bgee" id="ENSRNOG00000029784">
    <property type="expression patterns" value="Expressed in cerebellum and 19 other cell types or tissues"/>
</dbReference>
<dbReference type="GO" id="GO:0005884">
    <property type="term" value="C:actin filament"/>
    <property type="evidence" value="ECO:0000266"/>
    <property type="project" value="RGD"/>
</dbReference>
<dbReference type="GO" id="GO:0030424">
    <property type="term" value="C:axon"/>
    <property type="evidence" value="ECO:0000314"/>
    <property type="project" value="RGD"/>
</dbReference>
<dbReference type="GO" id="GO:0005911">
    <property type="term" value="C:cell-cell junction"/>
    <property type="evidence" value="ECO:0000250"/>
    <property type="project" value="UniProtKB"/>
</dbReference>
<dbReference type="GO" id="GO:0005813">
    <property type="term" value="C:centrosome"/>
    <property type="evidence" value="ECO:0007669"/>
    <property type="project" value="UniProtKB-SubCell"/>
</dbReference>
<dbReference type="GO" id="GO:0005694">
    <property type="term" value="C:chromosome"/>
    <property type="evidence" value="ECO:0007669"/>
    <property type="project" value="UniProtKB-SubCell"/>
</dbReference>
<dbReference type="GO" id="GO:0005737">
    <property type="term" value="C:cytoplasm"/>
    <property type="evidence" value="ECO:0000250"/>
    <property type="project" value="UniProtKB"/>
</dbReference>
<dbReference type="GO" id="GO:0005829">
    <property type="term" value="C:cytosol"/>
    <property type="evidence" value="ECO:0007669"/>
    <property type="project" value="Ensembl"/>
</dbReference>
<dbReference type="GO" id="GO:0030425">
    <property type="term" value="C:dendrite"/>
    <property type="evidence" value="ECO:0000314"/>
    <property type="project" value="RGD"/>
</dbReference>
<dbReference type="GO" id="GO:0005925">
    <property type="term" value="C:focal adhesion"/>
    <property type="evidence" value="ECO:0007669"/>
    <property type="project" value="UniProtKB-SubCell"/>
</dbReference>
<dbReference type="GO" id="GO:0098982">
    <property type="term" value="C:GABA-ergic synapse"/>
    <property type="evidence" value="ECO:0000266"/>
    <property type="project" value="RGD"/>
</dbReference>
<dbReference type="GO" id="GO:0098978">
    <property type="term" value="C:glutamatergic synapse"/>
    <property type="evidence" value="ECO:0000266"/>
    <property type="project" value="RGD"/>
</dbReference>
<dbReference type="GO" id="GO:0030426">
    <property type="term" value="C:growth cone"/>
    <property type="evidence" value="ECO:0000266"/>
    <property type="project" value="RGD"/>
</dbReference>
<dbReference type="GO" id="GO:0014704">
    <property type="term" value="C:intercalated disc"/>
    <property type="evidence" value="ECO:0000314"/>
    <property type="project" value="RGD"/>
</dbReference>
<dbReference type="GO" id="GO:0030027">
    <property type="term" value="C:lamellipodium"/>
    <property type="evidence" value="ECO:0000314"/>
    <property type="project" value="RGD"/>
</dbReference>
<dbReference type="GO" id="GO:0031965">
    <property type="term" value="C:nuclear membrane"/>
    <property type="evidence" value="ECO:0000314"/>
    <property type="project" value="RGD"/>
</dbReference>
<dbReference type="GO" id="GO:0005654">
    <property type="term" value="C:nucleoplasm"/>
    <property type="evidence" value="ECO:0000250"/>
    <property type="project" value="UniProtKB"/>
</dbReference>
<dbReference type="GO" id="GO:0005634">
    <property type="term" value="C:nucleus"/>
    <property type="evidence" value="ECO:0000266"/>
    <property type="project" value="RGD"/>
</dbReference>
<dbReference type="GO" id="GO:0005886">
    <property type="term" value="C:plasma membrane"/>
    <property type="evidence" value="ECO:0000250"/>
    <property type="project" value="UniProtKB"/>
</dbReference>
<dbReference type="GO" id="GO:0014069">
    <property type="term" value="C:postsynaptic density"/>
    <property type="evidence" value="ECO:0000266"/>
    <property type="project" value="RGD"/>
</dbReference>
<dbReference type="GO" id="GO:0098793">
    <property type="term" value="C:presynapse"/>
    <property type="evidence" value="ECO:0007669"/>
    <property type="project" value="GOC"/>
</dbReference>
<dbReference type="GO" id="GO:0032991">
    <property type="term" value="C:protein-containing complex"/>
    <property type="evidence" value="ECO:0000266"/>
    <property type="project" value="RGD"/>
</dbReference>
<dbReference type="GO" id="GO:0001726">
    <property type="term" value="C:ruffle"/>
    <property type="evidence" value="ECO:0000314"/>
    <property type="project" value="RGD"/>
</dbReference>
<dbReference type="GO" id="GO:0032587">
    <property type="term" value="C:ruffle membrane"/>
    <property type="evidence" value="ECO:0007669"/>
    <property type="project" value="UniProtKB-SubCell"/>
</dbReference>
<dbReference type="GO" id="GO:0030018">
    <property type="term" value="C:Z disc"/>
    <property type="evidence" value="ECO:0000314"/>
    <property type="project" value="RGD"/>
</dbReference>
<dbReference type="GO" id="GO:0005524">
    <property type="term" value="F:ATP binding"/>
    <property type="evidence" value="ECO:0007669"/>
    <property type="project" value="UniProtKB-KW"/>
</dbReference>
<dbReference type="GO" id="GO:0005518">
    <property type="term" value="F:collagen binding"/>
    <property type="evidence" value="ECO:0000250"/>
    <property type="project" value="UniProtKB"/>
</dbReference>
<dbReference type="GO" id="GO:0043015">
    <property type="term" value="F:gamma-tubulin binding"/>
    <property type="evidence" value="ECO:0000250"/>
    <property type="project" value="UniProtKB"/>
</dbReference>
<dbReference type="GO" id="GO:0004709">
    <property type="term" value="F:MAP kinase kinase kinase activity"/>
    <property type="evidence" value="ECO:0000304"/>
    <property type="project" value="RGD"/>
</dbReference>
<dbReference type="GO" id="GO:0004672">
    <property type="term" value="F:protein kinase activity"/>
    <property type="evidence" value="ECO:0000314"/>
    <property type="project" value="RGD"/>
</dbReference>
<dbReference type="GO" id="GO:0019901">
    <property type="term" value="F:protein kinase binding"/>
    <property type="evidence" value="ECO:0000353"/>
    <property type="project" value="RGD"/>
</dbReference>
<dbReference type="GO" id="GO:0106310">
    <property type="term" value="F:protein serine kinase activity"/>
    <property type="evidence" value="ECO:0007669"/>
    <property type="project" value="RHEA"/>
</dbReference>
<dbReference type="GO" id="GO:0004674">
    <property type="term" value="F:protein serine/threonine kinase activity"/>
    <property type="evidence" value="ECO:0000314"/>
    <property type="project" value="RGD"/>
</dbReference>
<dbReference type="GO" id="GO:0031267">
    <property type="term" value="F:small GTPase binding"/>
    <property type="evidence" value="ECO:0007669"/>
    <property type="project" value="Ensembl"/>
</dbReference>
<dbReference type="GO" id="GO:0030036">
    <property type="term" value="P:actin cytoskeleton organization"/>
    <property type="evidence" value="ECO:0000250"/>
    <property type="project" value="UniProtKB"/>
</dbReference>
<dbReference type="GO" id="GO:0021764">
    <property type="term" value="P:amygdala development"/>
    <property type="evidence" value="ECO:0000266"/>
    <property type="project" value="RGD"/>
</dbReference>
<dbReference type="GO" id="GO:0006915">
    <property type="term" value="P:apoptotic process"/>
    <property type="evidence" value="ECO:0007669"/>
    <property type="project" value="UniProtKB-KW"/>
</dbReference>
<dbReference type="GO" id="GO:0048754">
    <property type="term" value="P:branching morphogenesis of an epithelial tube"/>
    <property type="evidence" value="ECO:0000250"/>
    <property type="project" value="UniProtKB"/>
</dbReference>
<dbReference type="GO" id="GO:0016477">
    <property type="term" value="P:cell migration"/>
    <property type="evidence" value="ECO:0000266"/>
    <property type="project" value="RGD"/>
</dbReference>
<dbReference type="GO" id="GO:0032869">
    <property type="term" value="P:cellular response to insulin stimulus"/>
    <property type="evidence" value="ECO:0000314"/>
    <property type="project" value="RGD"/>
</dbReference>
<dbReference type="GO" id="GO:0009267">
    <property type="term" value="P:cellular response to starvation"/>
    <property type="evidence" value="ECO:0000318"/>
    <property type="project" value="GO_Central"/>
</dbReference>
<dbReference type="GO" id="GO:0021549">
    <property type="term" value="P:cerebellum development"/>
    <property type="evidence" value="ECO:0000270"/>
    <property type="project" value="RGD"/>
</dbReference>
<dbReference type="GO" id="GO:0006338">
    <property type="term" value="P:chromatin remodeling"/>
    <property type="evidence" value="ECO:0000250"/>
    <property type="project" value="UniProtKB"/>
</dbReference>
<dbReference type="GO" id="GO:0016358">
    <property type="term" value="P:dendrite development"/>
    <property type="evidence" value="ECO:0000266"/>
    <property type="project" value="RGD"/>
</dbReference>
<dbReference type="GO" id="GO:0060996">
    <property type="term" value="P:dendritic spine development"/>
    <property type="evidence" value="ECO:0000266"/>
    <property type="project" value="RGD"/>
</dbReference>
<dbReference type="GO" id="GO:0006974">
    <property type="term" value="P:DNA damage response"/>
    <property type="evidence" value="ECO:0000250"/>
    <property type="project" value="UniProtKB"/>
</dbReference>
<dbReference type="GO" id="GO:0030010">
    <property type="term" value="P:establishment of cell polarity"/>
    <property type="evidence" value="ECO:0000315"/>
    <property type="project" value="RGD"/>
</dbReference>
<dbReference type="GO" id="GO:0006887">
    <property type="term" value="P:exocytosis"/>
    <property type="evidence" value="ECO:0007669"/>
    <property type="project" value="UniProtKB-KW"/>
</dbReference>
<dbReference type="GO" id="GO:0061534">
    <property type="term" value="P:gamma-aminobutyric acid secretion, neurotransmission"/>
    <property type="evidence" value="ECO:0000266"/>
    <property type="project" value="RGD"/>
</dbReference>
<dbReference type="GO" id="GO:0061535">
    <property type="term" value="P:glutamate secretion, neurotransmission"/>
    <property type="evidence" value="ECO:0000266"/>
    <property type="project" value="RGD"/>
</dbReference>
<dbReference type="GO" id="GO:0048012">
    <property type="term" value="P:hepatocyte growth factor receptor signaling pathway"/>
    <property type="evidence" value="ECO:0000266"/>
    <property type="project" value="RGD"/>
</dbReference>
<dbReference type="GO" id="GO:0035556">
    <property type="term" value="P:intracellular signal transduction"/>
    <property type="evidence" value="ECO:0000318"/>
    <property type="project" value="GO_Central"/>
</dbReference>
<dbReference type="GO" id="GO:0061052">
    <property type="term" value="P:negative regulation of cell growth involved in cardiac muscle cell development"/>
    <property type="evidence" value="ECO:0000315"/>
    <property type="project" value="RGD"/>
</dbReference>
<dbReference type="GO" id="GO:0060244">
    <property type="term" value="P:negative regulation of cell proliferation involved in contact inhibition"/>
    <property type="evidence" value="ECO:0000250"/>
    <property type="project" value="UniProtKB"/>
</dbReference>
<dbReference type="GO" id="GO:0007528">
    <property type="term" value="P:neuromuscular junction development"/>
    <property type="evidence" value="ECO:0000266"/>
    <property type="project" value="RGD"/>
</dbReference>
<dbReference type="GO" id="GO:0048812">
    <property type="term" value="P:neuron projection morphogenesis"/>
    <property type="evidence" value="ECO:0000315"/>
    <property type="project" value="RGD"/>
</dbReference>
<dbReference type="GO" id="GO:0098597">
    <property type="term" value="P:observational learning"/>
    <property type="evidence" value="ECO:0000266"/>
    <property type="project" value="RGD"/>
</dbReference>
<dbReference type="GO" id="GO:0045773">
    <property type="term" value="P:positive regulation of axon extension"/>
    <property type="evidence" value="ECO:0000315"/>
    <property type="project" value="RGD"/>
</dbReference>
<dbReference type="GO" id="GO:0030335">
    <property type="term" value="P:positive regulation of cell migration"/>
    <property type="evidence" value="ECO:0000250"/>
    <property type="project" value="UniProtKB"/>
</dbReference>
<dbReference type="GO" id="GO:0008284">
    <property type="term" value="P:positive regulation of cell population proliferation"/>
    <property type="evidence" value="ECO:0000266"/>
    <property type="project" value="RGD"/>
</dbReference>
<dbReference type="GO" id="GO:0010763">
    <property type="term" value="P:positive regulation of fibroblast migration"/>
    <property type="evidence" value="ECO:0000314"/>
    <property type="project" value="RGD"/>
</dbReference>
<dbReference type="GO" id="GO:0046628">
    <property type="term" value="P:positive regulation of insulin receptor signaling pathway"/>
    <property type="evidence" value="ECO:0000315"/>
    <property type="project" value="RGD"/>
</dbReference>
<dbReference type="GO" id="GO:0033148">
    <property type="term" value="P:positive regulation of intracellular estrogen receptor signaling pathway"/>
    <property type="evidence" value="ECO:0000250"/>
    <property type="project" value="UniProtKB"/>
</dbReference>
<dbReference type="GO" id="GO:0090063">
    <property type="term" value="P:positive regulation of microtubule nucleation"/>
    <property type="evidence" value="ECO:0000250"/>
    <property type="project" value="UniProtKB"/>
</dbReference>
<dbReference type="GO" id="GO:0031116">
    <property type="term" value="P:positive regulation of microtubule polymerization"/>
    <property type="evidence" value="ECO:0000266"/>
    <property type="project" value="RGD"/>
</dbReference>
<dbReference type="GO" id="GO:0090314">
    <property type="term" value="P:positive regulation of protein targeting to membrane"/>
    <property type="evidence" value="ECO:0000315"/>
    <property type="project" value="RGD"/>
</dbReference>
<dbReference type="GO" id="GO:0051496">
    <property type="term" value="P:positive regulation of stress fiber assembly"/>
    <property type="evidence" value="ECO:0000250"/>
    <property type="project" value="UniProtKB"/>
</dbReference>
<dbReference type="GO" id="GO:1904754">
    <property type="term" value="P:positive regulation of vascular associated smooth muscle cell migration"/>
    <property type="evidence" value="ECO:0000315"/>
    <property type="project" value="RGD"/>
</dbReference>
<dbReference type="GO" id="GO:1904707">
    <property type="term" value="P:positive regulation of vascular associated smooth muscle cell proliferation"/>
    <property type="evidence" value="ECO:0000315"/>
    <property type="project" value="RGD"/>
</dbReference>
<dbReference type="GO" id="GO:1903608">
    <property type="term" value="P:protein localization to cytoplasmic stress granule"/>
    <property type="evidence" value="ECO:0000250"/>
    <property type="project" value="UniProtKB"/>
</dbReference>
<dbReference type="GO" id="GO:0043113">
    <property type="term" value="P:receptor clustering"/>
    <property type="evidence" value="ECO:0000266"/>
    <property type="project" value="RGD"/>
</dbReference>
<dbReference type="GO" id="GO:0032956">
    <property type="term" value="P:regulation of actin cytoskeleton organization"/>
    <property type="evidence" value="ECO:0000315"/>
    <property type="project" value="RGD"/>
</dbReference>
<dbReference type="GO" id="GO:0050770">
    <property type="term" value="P:regulation of axonogenesis"/>
    <property type="evidence" value="ECO:0000318"/>
    <property type="project" value="GO_Central"/>
</dbReference>
<dbReference type="GO" id="GO:0010468">
    <property type="term" value="P:regulation of gene expression"/>
    <property type="evidence" value="ECO:0000266"/>
    <property type="project" value="RGD"/>
</dbReference>
<dbReference type="GO" id="GO:1900271">
    <property type="term" value="P:regulation of long-term synaptic potentiation"/>
    <property type="evidence" value="ECO:0000266"/>
    <property type="project" value="RGD"/>
</dbReference>
<dbReference type="GO" id="GO:0043408">
    <property type="term" value="P:regulation of MAPK cascade"/>
    <property type="evidence" value="ECO:0000266"/>
    <property type="project" value="RGD"/>
</dbReference>
<dbReference type="GO" id="GO:0150036">
    <property type="term" value="P:regulation of trans-synaptic signaling by endocannabinoid, modulating synaptic transmission"/>
    <property type="evidence" value="ECO:0000266"/>
    <property type="project" value="RGD"/>
</dbReference>
<dbReference type="GO" id="GO:0001666">
    <property type="term" value="P:response to hypoxia"/>
    <property type="evidence" value="ECO:0000314"/>
    <property type="project" value="RGD"/>
</dbReference>
<dbReference type="GO" id="GO:0007264">
    <property type="term" value="P:small GTPase-mediated signal transduction"/>
    <property type="evidence" value="ECO:0000304"/>
    <property type="project" value="RGD"/>
</dbReference>
<dbReference type="GO" id="GO:0019226">
    <property type="term" value="P:transmission of nerve impulse"/>
    <property type="evidence" value="ECO:0000266"/>
    <property type="project" value="RGD"/>
</dbReference>
<dbReference type="GO" id="GO:0042060">
    <property type="term" value="P:wound healing"/>
    <property type="evidence" value="ECO:0000250"/>
    <property type="project" value="UniProtKB"/>
</dbReference>
<dbReference type="CDD" id="cd01093">
    <property type="entry name" value="CRIB_PAK_like"/>
    <property type="match status" value="1"/>
</dbReference>
<dbReference type="CDD" id="cd06654">
    <property type="entry name" value="STKc_PAK1"/>
    <property type="match status" value="1"/>
</dbReference>
<dbReference type="FunFam" id="1.10.510.10:FF:000011">
    <property type="entry name" value="Non-specific serine/threonine protein kinase"/>
    <property type="match status" value="1"/>
</dbReference>
<dbReference type="FunFam" id="3.30.200.20:FF:000069">
    <property type="entry name" value="Non-specific serine/threonine protein kinase"/>
    <property type="match status" value="1"/>
</dbReference>
<dbReference type="FunFam" id="3.90.810.10:FF:000001">
    <property type="entry name" value="Non-specific serine/threonine protein kinase"/>
    <property type="match status" value="1"/>
</dbReference>
<dbReference type="Gene3D" id="3.90.810.10">
    <property type="entry name" value="CRIB domain"/>
    <property type="match status" value="1"/>
</dbReference>
<dbReference type="Gene3D" id="3.30.200.20">
    <property type="entry name" value="Phosphorylase Kinase, domain 1"/>
    <property type="match status" value="1"/>
</dbReference>
<dbReference type="Gene3D" id="1.10.510.10">
    <property type="entry name" value="Transferase(Phosphotransferase) domain 1"/>
    <property type="match status" value="1"/>
</dbReference>
<dbReference type="IDEAL" id="IID50044"/>
<dbReference type="InterPro" id="IPR000095">
    <property type="entry name" value="CRIB_dom"/>
</dbReference>
<dbReference type="InterPro" id="IPR036936">
    <property type="entry name" value="CRIB_dom_sf"/>
</dbReference>
<dbReference type="InterPro" id="IPR011009">
    <property type="entry name" value="Kinase-like_dom_sf"/>
</dbReference>
<dbReference type="InterPro" id="IPR051931">
    <property type="entry name" value="PAK3-like"/>
</dbReference>
<dbReference type="InterPro" id="IPR033923">
    <property type="entry name" value="PAK_BD"/>
</dbReference>
<dbReference type="InterPro" id="IPR000719">
    <property type="entry name" value="Prot_kinase_dom"/>
</dbReference>
<dbReference type="InterPro" id="IPR017441">
    <property type="entry name" value="Protein_kinase_ATP_BS"/>
</dbReference>
<dbReference type="InterPro" id="IPR008271">
    <property type="entry name" value="Ser/Thr_kinase_AS"/>
</dbReference>
<dbReference type="PANTHER" id="PTHR45832:SF10">
    <property type="entry name" value="NON-SPECIFIC SERINE_THREONINE PROTEIN KINASE"/>
    <property type="match status" value="1"/>
</dbReference>
<dbReference type="PANTHER" id="PTHR45832">
    <property type="entry name" value="SERINE/THREONINE-PROTEIN KINASE SAMKA-RELATED-RELATED"/>
    <property type="match status" value="1"/>
</dbReference>
<dbReference type="Pfam" id="PF00786">
    <property type="entry name" value="PBD"/>
    <property type="match status" value="1"/>
</dbReference>
<dbReference type="Pfam" id="PF00069">
    <property type="entry name" value="Pkinase"/>
    <property type="match status" value="1"/>
</dbReference>
<dbReference type="SMART" id="SM00285">
    <property type="entry name" value="PBD"/>
    <property type="match status" value="1"/>
</dbReference>
<dbReference type="SMART" id="SM00220">
    <property type="entry name" value="S_TKc"/>
    <property type="match status" value="1"/>
</dbReference>
<dbReference type="SUPFAM" id="SSF56112">
    <property type="entry name" value="Protein kinase-like (PK-like)"/>
    <property type="match status" value="1"/>
</dbReference>
<dbReference type="PROSITE" id="PS50108">
    <property type="entry name" value="CRIB"/>
    <property type="match status" value="1"/>
</dbReference>
<dbReference type="PROSITE" id="PS00107">
    <property type="entry name" value="PROTEIN_KINASE_ATP"/>
    <property type="match status" value="1"/>
</dbReference>
<dbReference type="PROSITE" id="PS50011">
    <property type="entry name" value="PROTEIN_KINASE_DOM"/>
    <property type="match status" value="1"/>
</dbReference>
<dbReference type="PROSITE" id="PS00108">
    <property type="entry name" value="PROTEIN_KINASE_ST"/>
    <property type="match status" value="1"/>
</dbReference>
<comment type="function">
    <text evidence="1 2 8 9 10 12 13 15 16 17">Protein kinase involved in intracellular signaling pathways downstream of integrins and receptor-type kinases that plays an important role in cytoskeleton dynamics, in cell adhesion, migration, proliferation, apoptosis, mitosis, and in vesicle-mediated transport processes (PubMed:12876277, PubMed:14707132, PubMed:19029984, PubMed:9032240, PubMed:9528787). Can directly phosphorylate BAD and protects cells against apoptosis (By similarity). Activated by interaction with CDC42 and RAC1 (PubMed:9528787). Functions as a GTPase effector that links the Rho-related GTPases CDC42 and RAC1 to the JNK MAP kinase pathway (PubMed:9528787). Phosphorylates and activates MAP2K1, and thereby mediates activation of downstream MAP kinases (PubMed:12876277, PubMed:19029984, PubMed:9032240, PubMed:9528787). Involved in the reorganization of the actin cytoskeleton, actin stress fibers and of focal adhesion complexes (PubMed:9774440). Phosphorylates the tubulin chaperone TBCB and thereby plays a role in the regulation of microtubule biogenesis and organization of the tubulin cytoskeleton (By similarity). Plays a role in the regulation of insulin secretion in response to elevated glucose levels (By similarity). Part of a ternary complex that contains PAK1, DVL1 and MUSK that is important for MUSK-dependent regulation of AChR clustering during the formation of the neuromuscular junction (NMJ) (By similarity). Activity is inhibited in cells undergoing apoptosis, potentially due to binding of CDC2L1 and CDC2L2 (By similarity). Phosphorylates MYL9/MLC2 (By similarity). Phosphorylates RAF1 at 'Ser-338' and 'Ser-339' resulting in: activation of RAF1, stimulation of RAF1 translocation to mitochondria, phosphorylation of BAD by RAF1, and RAF1 binding to BCL2 (By similarity). Phosphorylates SNAI1 at 'Ser-246' promoting its transcriptional repressor activity by increasing its accumulation in the nucleus (By similarity). In podocytes, promotes NR3C2 nuclear localization (PubMed:19029984). Required for atypical chemokine receptor ACKR2-induced phosphorylation of LIMK1 and cofilin (CFL1) and for the up-regulation of ACKR2 from endosomal compartment to cell membrane, increasing its efficiency in chemokine uptake and degradation (By similarity). In synapses, seems to mediate the regulation of F-actin cluster formation performed by SHANK3, maybe through CFL1 phosphorylation and inactivation (PubMed:24089484). Plays a role in RUFY3-mediated facilitating gastric cancer cells migration and invasion (By similarity). In response to DNA damage, phosphorylates MORC2 which activates its ATPase activity and facilitates chromatin remodeling (By similarity). In neurons, plays a crucial role in regulating GABA(A) receptor synaptic stability and hence GABAergic inhibitory synaptic transmission through its role in F-actin stabilization (PubMed:25284783). In hippocampal neurons, necessary for the formation of dendritic spines and excitatory synapses; this function is dependent on kinase activity and may be exerted by the regulation of actomyosin contractility through the phosphorylation of myosin II regulatory light chain (MLC) (By similarity). Along with GIT1, positively regulates microtubule nucleation during interphase (By similarity). Phosphorylates FXR1, promoting its localization to stress granules and activity (By similarity). Phosphorylates ILK on 'Thr-173' and 'Ser-246', promoting nuclear export of ILK (By similarity).</text>
</comment>
<comment type="catalytic activity">
    <reaction evidence="15">
        <text>L-seryl-[protein] + ATP = O-phospho-L-seryl-[protein] + ADP + H(+)</text>
        <dbReference type="Rhea" id="RHEA:17989"/>
        <dbReference type="Rhea" id="RHEA-COMP:9863"/>
        <dbReference type="Rhea" id="RHEA-COMP:11604"/>
        <dbReference type="ChEBI" id="CHEBI:15378"/>
        <dbReference type="ChEBI" id="CHEBI:29999"/>
        <dbReference type="ChEBI" id="CHEBI:30616"/>
        <dbReference type="ChEBI" id="CHEBI:83421"/>
        <dbReference type="ChEBI" id="CHEBI:456216"/>
        <dbReference type="EC" id="2.7.11.1"/>
    </reaction>
</comment>
<comment type="catalytic activity">
    <reaction evidence="15">
        <text>L-threonyl-[protein] + ATP = O-phospho-L-threonyl-[protein] + ADP + H(+)</text>
        <dbReference type="Rhea" id="RHEA:46608"/>
        <dbReference type="Rhea" id="RHEA-COMP:11060"/>
        <dbReference type="Rhea" id="RHEA-COMP:11605"/>
        <dbReference type="ChEBI" id="CHEBI:15378"/>
        <dbReference type="ChEBI" id="CHEBI:30013"/>
        <dbReference type="ChEBI" id="CHEBI:30616"/>
        <dbReference type="ChEBI" id="CHEBI:61977"/>
        <dbReference type="ChEBI" id="CHEBI:456216"/>
        <dbReference type="EC" id="2.7.11.1"/>
    </reaction>
</comment>
<comment type="cofactor">
    <cofactor evidence="2">
        <name>Mg(2+)</name>
        <dbReference type="ChEBI" id="CHEBI:18420"/>
    </cofactor>
</comment>
<comment type="activity regulation">
    <text evidence="2 9 15 17">Phosphorylation of Thr-84 by OXSR1 inhibits activation (By similarity). Activated by binding small G proteins. Binding of GTP-bound CDC42 or RAC1 to the autoregulatory region releases monomers from the autoinhibited dimer, and enables activation by phosphorylation of Thr-422.</text>
</comment>
<comment type="subunit">
    <text evidence="1 2 15">Homodimer in its autoinhibited state. Active as monomer. Interacts with GIT1 (By similarity). Component of cytoplasmic complexes, which also contains PXN, ARHGEF7 and GIT1. Interacts with NISCH (By similarity). Interacts with DVL1; mediates the formation of a DVL1, MUSK and PAK1 ternary complex involved in AChR clustering (By similarity). Binds to the caspase-cleaved p110 isoform of CDC2L1 and CDC2L2, p110C, but not the full-length proteins (By similarity). Interacts with ARHGEF7 (By similarity). Interacts with SCRIB (By similarity). Interacts with PDPK1 (By similarity). Interacts (via kinase domain) with RAF1 (By similarity). Interacts with NCK1 and NCK2 (By similarity). Interacts with TBCB (By similarity). Interacts with BRSK2 (By similarity). Interacts tightly with GTP-bound but not GDP-bound CDC42/P21 and RAC1 (PubMed:9032240). Interacts with SNAI1 (By similarity). Interacts with CIB1 (via N-terminal region); the interaction is direct, promotes PAK1 activity and occurs in a calcium-dependent manner. Interacts with INPP5K (By similarity). Interacts with gamma-tubulin (By similarity). Interacts with RHOU; the interaction promotes PAK1 activation (By similarity).</text>
</comment>
<comment type="interaction">
    <interactant intactId="EBI-444379">
        <id>P35465</id>
    </interactant>
    <interactant intactId="EBI-299269">
        <id>P20152</id>
        <label>Vim</label>
    </interactant>
    <organismsDiffer>true</organismsDiffer>
    <experiments>2</experiments>
</comment>
<comment type="subcellular location">
    <subcellularLocation>
        <location evidence="2">Cytoplasm</location>
    </subcellularLocation>
    <subcellularLocation>
        <location evidence="2">Cell junction</location>
        <location evidence="2">Focal adhesion</location>
    </subcellularLocation>
    <subcellularLocation>
        <location evidence="2">Cell projection</location>
        <location evidence="2">Lamellipodium</location>
    </subcellularLocation>
    <subcellularLocation>
        <location evidence="2 15">Cell membrane</location>
    </subcellularLocation>
    <subcellularLocation>
        <location evidence="2">Cell projection</location>
        <location evidence="2">Ruffle membrane</location>
    </subcellularLocation>
    <subcellularLocation>
        <location evidence="2">Cell projection</location>
        <location evidence="2">Invadopodium</location>
    </subcellularLocation>
    <subcellularLocation>
        <location evidence="2">Nucleus</location>
        <location evidence="2">Nucleoplasm</location>
    </subcellularLocation>
    <subcellularLocation>
        <location evidence="2">Chromosome</location>
    </subcellularLocation>
    <subcellularLocation>
        <location evidence="2">Cytoplasm</location>
        <location evidence="2">Cytoskeleton</location>
        <location evidence="2">Microtubule organizing center</location>
        <location evidence="2">Centrosome</location>
    </subcellularLocation>
    <text evidence="2">Recruited to the cell membrane by interaction with CDC42 and RAC1. Recruited to focal adhesions upon activation. Colocalized with CIB1 within membrane ruffles during cell spreading upon readhesion to fibronectin. Colocalizes with RUFY3, F-actin and other core migration components in invadopodia at the cell periphery (By similarity). Upon DNA damage, translocates to the nucleoplasm when phosphorylated at Thr-212 where is co-recruited with MORC2 on damaged chromatin (By similarity). Localization to the centrosome does not depend upon the presence of gamma-tubulin (By similarity). Localization of the active, but not inactive, protein to the adhesions and edge of lamellipodia is mediated by interaction with GIT1 (By similarity).</text>
</comment>
<comment type="tissue specificity">
    <text evidence="14">Expressed predominantly in the brain, with higher expression in neuronal groups associated with motor function, and at lower levels in the spleen.</text>
</comment>
<comment type="developmental stage">
    <text>Found in the embryonic CNS with little expression elsewhere.</text>
</comment>
<comment type="PTM">
    <text evidence="1 2 9 11 12 15">Autophosphorylated in trans, meaning that in a dimer, one kinase molecule phosphorylates the other one. Activated by autophosphorylation at Thr-422 in response to a conformation change, triggered by interaction with GTP-bound CDC42 or RAC1. Activated by phosphorylation at Thr-422 by PDPK1. Phosphorylated by JAK2 in response to PRL; this increases PAK1 kinase activity. Phosphorylated at Ser-21 by PKB/AKT; this reduces interaction with NCK1 and association with focal adhesion sites (By similarity). Activated by phosphorylation at Thr-422 by BRSK2. Upon DNA damage, phosphorylated at Thr-211 and translocates to the nucleoplasm (By similarity). Phosphorylated at tyrosine residues, which can be enhanced by NTN1 (By similarity).</text>
</comment>
<comment type="similarity">
    <text evidence="20">Belongs to the protein kinase superfamily. STE Ser/Thr protein kinase family. STE20 subfamily.</text>
</comment>
<protein>
    <recommendedName>
        <fullName evidence="20">Serine/threonine-protein kinase PAK 1</fullName>
        <ecNumber evidence="15">2.7.11.1</ecNumber>
    </recommendedName>
    <alternativeName>
        <fullName evidence="2">Alpha-PAK</fullName>
    </alternativeName>
    <alternativeName>
        <fullName evidence="19">Protein kinase MUK2</fullName>
    </alternativeName>
    <alternativeName>
        <fullName evidence="2">p21-activated kinase 1</fullName>
        <shortName>PAK-1</shortName>
    </alternativeName>
    <alternativeName>
        <fullName evidence="18">p68-PAK</fullName>
    </alternativeName>
</protein>
<name>PAK1_RAT</name>
<accession>P35465</accession>
<accession>Q62934</accession>
<feature type="initiator methionine" description="Removed" evidence="2">
    <location>
        <position position="1"/>
    </location>
</feature>
<feature type="chain" id="PRO_0000086462" description="Serine/threonine-protein kinase PAK 1">
    <location>
        <begin position="2"/>
        <end position="544"/>
    </location>
</feature>
<feature type="domain" description="CRIB" evidence="3">
    <location>
        <begin position="75"/>
        <end position="88"/>
    </location>
</feature>
<feature type="domain" description="Protein kinase" evidence="4">
    <location>
        <begin position="269"/>
        <end position="520"/>
    </location>
</feature>
<feature type="region of interest" description="Disordered" evidence="6">
    <location>
        <begin position="1"/>
        <end position="79"/>
    </location>
</feature>
<feature type="region of interest" description="Autoregulatory region" evidence="2">
    <location>
        <begin position="70"/>
        <end position="140"/>
    </location>
</feature>
<feature type="region of interest" description="GTPase-binding" evidence="2">
    <location>
        <begin position="75"/>
        <end position="105"/>
    </location>
</feature>
<feature type="region of interest" description="Disordered" evidence="6">
    <location>
        <begin position="150"/>
        <end position="195"/>
    </location>
</feature>
<feature type="region of interest" description="Disordered" evidence="6">
    <location>
        <begin position="209"/>
        <end position="250"/>
    </location>
</feature>
<feature type="compositionally biased region" description="Basic and acidic residues" evidence="6">
    <location>
        <begin position="68"/>
        <end position="79"/>
    </location>
</feature>
<feature type="compositionally biased region" description="Polar residues" evidence="6">
    <location>
        <begin position="150"/>
        <end position="166"/>
    </location>
</feature>
<feature type="compositionally biased region" description="Acidic residues" evidence="6">
    <location>
        <begin position="174"/>
        <end position="183"/>
    </location>
</feature>
<feature type="compositionally biased region" description="Polar residues" evidence="6">
    <location>
        <begin position="219"/>
        <end position="230"/>
    </location>
</feature>
<feature type="active site" description="Proton acceptor" evidence="4 5">
    <location>
        <position position="388"/>
    </location>
</feature>
<feature type="binding site" evidence="4">
    <location>
        <begin position="275"/>
        <end position="283"/>
    </location>
    <ligand>
        <name>ATP</name>
        <dbReference type="ChEBI" id="CHEBI:30616"/>
    </ligand>
</feature>
<feature type="binding site" evidence="4">
    <location>
        <position position="298"/>
    </location>
    <ligand>
        <name>ATP</name>
        <dbReference type="ChEBI" id="CHEBI:30616"/>
    </ligand>
</feature>
<feature type="modified residue" description="N-acetylserine" evidence="2">
    <location>
        <position position="2"/>
    </location>
</feature>
<feature type="modified residue" description="Phosphoserine; by PKB and autocatalysis" evidence="15">
    <location>
        <position position="21"/>
    </location>
</feature>
<feature type="modified residue" description="Phosphoserine; by autocatalysis" evidence="21">
    <location>
        <position position="57"/>
    </location>
</feature>
<feature type="modified residue" description="Phosphothreonine; by OXSR1" evidence="9">
    <location>
        <position position="84"/>
    </location>
</feature>
<feature type="modified residue" description="Phosphoserine" evidence="2">
    <location>
        <position position="115"/>
    </location>
</feature>
<feature type="modified residue" description="Phosphotyrosine" evidence="2">
    <location>
        <position position="131"/>
    </location>
</feature>
<feature type="modified residue" description="Phosphotyrosine" evidence="2">
    <location>
        <position position="142"/>
    </location>
</feature>
<feature type="modified residue" description="Phosphoserine; by autocatalysis" evidence="21">
    <location>
        <position position="144"/>
    </location>
</feature>
<feature type="modified residue" description="Phosphoserine; by autocatalysis" evidence="21">
    <location>
        <position position="149"/>
    </location>
</feature>
<feature type="modified residue" description="Phosphotyrosine; by JAK2" evidence="2">
    <location>
        <position position="153"/>
    </location>
</feature>
<feature type="modified residue" description="Phosphoserine" evidence="23">
    <location>
        <position position="174"/>
    </location>
</feature>
<feature type="modified residue" description="Phosphothreonine" evidence="2">
    <location>
        <position position="184"/>
    </location>
</feature>
<feature type="modified residue" description="Phosphoserine; by autocatalysis" evidence="21">
    <location>
        <position position="198"/>
    </location>
</feature>
<feature type="modified residue" description="Phosphotyrosine; by JAK2" evidence="2">
    <location>
        <position position="200"/>
    </location>
</feature>
<feature type="modified residue" description="Phosphoserine; by autocatalysis" evidence="15">
    <location>
        <position position="203"/>
    </location>
</feature>
<feature type="modified residue" description="Phosphothreonine" evidence="2">
    <location>
        <position position="211"/>
    </location>
</feature>
<feature type="modified residue" description="Phosphothreonine" evidence="2">
    <location>
        <position position="218"/>
    </location>
</feature>
<feature type="modified residue" description="Phosphoserine" evidence="2">
    <location>
        <position position="219"/>
    </location>
</feature>
<feature type="modified residue" description="Phosphoserine" evidence="23">
    <location>
        <position position="222"/>
    </location>
</feature>
<feature type="modified residue" description="Phosphothreonine" evidence="1">
    <location>
        <position position="224"/>
    </location>
</feature>
<feature type="modified residue" description="Phosphothreonine" evidence="1">
    <location>
        <position position="228"/>
    </location>
</feature>
<feature type="modified residue" description="Phosphothreonine" evidence="2">
    <location>
        <position position="229"/>
    </location>
</feature>
<feature type="modified residue" description="Phosphotyrosine; by JAK2" evidence="2">
    <location>
        <position position="284"/>
    </location>
</feature>
<feature type="modified residue" description="Phosphothreonine; by autocatalysis, BRSK2 and PDPK1" evidence="11 12 15">
    <location>
        <position position="422"/>
    </location>
</feature>
<feature type="mutagenesis site" description="Abolishes interaction with CDC42, leading to strongly decreased activity; when associated with L-86. Reduces NMDA receptor-mediated synaptic currents; when associated with L-86 and R-299." evidence="12 17">
    <original>H</original>
    <variation>L</variation>
    <location>
        <position position="83"/>
    </location>
</feature>
<feature type="mutagenesis site" description="Constitutively active." evidence="9">
    <original>T</original>
    <variation>A</variation>
    <location>
        <position position="84"/>
    </location>
</feature>
<feature type="mutagenesis site" description="Inhibits activation by binding to CDC42." evidence="9">
    <original>T</original>
    <variation>E</variation>
    <location>
        <position position="84"/>
    </location>
</feature>
<feature type="mutagenesis site" description="Abolishes interaction with CDC42, leading to strongly decreased activity; when associated with L-83. Reduces NMDA receptor-mediated synaptic currents; when associated with L-83 and R-299." evidence="12 17">
    <original>H</original>
    <variation>L</variation>
    <location>
        <position position="86"/>
    </location>
</feature>
<feature type="mutagenesis site" description="Abolishes autoinhibition, leading to constitutive kinase activation." evidence="17">
    <original>L</original>
    <variation>F</variation>
    <location>
        <position position="107"/>
    </location>
</feature>
<feature type="mutagenesis site" description="Decreases activity; when associated with A-149." evidence="7">
    <original>S</original>
    <variation>A</variation>
    <location>
        <position position="144"/>
    </location>
</feature>
<feature type="mutagenesis site" description="Decreases activity; when associated with A-144." evidence="7">
    <original>S</original>
    <variation>A</variation>
    <location>
        <position position="149"/>
    </location>
</feature>
<feature type="mutagenesis site" description="Reduces NMDA receptor-mediated synaptic currents; when associated with L-83 and L-86." evidence="12">
    <original>K</original>
    <variation>R</variation>
    <location>
        <position position="298"/>
    </location>
</feature>
<feature type="mutagenesis site" description="Decreases kinase activity." evidence="15">
    <original>L</original>
    <variation>S</variation>
    <location>
        <position position="404"/>
    </location>
</feature>
<feature type="mutagenesis site" description="Decreases activity." evidence="7 12 15">
    <original>T</original>
    <variation>A</variation>
    <location>
        <position position="422"/>
    </location>
</feature>
<feature type="mutagenesis site" description="Increases constitutive activity." evidence="7 12 15">
    <original>T</original>
    <variation>E</variation>
    <location>
        <position position="422"/>
    </location>
</feature>
<feature type="strand" evidence="24">
    <location>
        <begin position="88"/>
        <end position="90"/>
    </location>
</feature>
<feature type="helix" evidence="24">
    <location>
        <begin position="91"/>
        <end position="93"/>
    </location>
</feature>
<feature type="strand" evidence="24">
    <location>
        <begin position="95"/>
        <end position="98"/>
    </location>
</feature>
<feature type="helix" evidence="24">
    <location>
        <begin position="101"/>
        <end position="106"/>
    </location>
</feature>
<feature type="strand" evidence="24">
    <location>
        <begin position="107"/>
        <end position="109"/>
    </location>
</feature>
<feature type="strand" evidence="24">
    <location>
        <begin position="113"/>
        <end position="115"/>
    </location>
</feature>
<gene>
    <name evidence="22" type="primary">Pak1</name>
</gene>